<protein>
    <recommendedName>
        <fullName>Autophagy-related protein 32</fullName>
    </recommendedName>
</protein>
<reference key="1">
    <citation type="journal article" date="2004" name="Nature">
        <title>Genome evolution in yeasts.</title>
        <authorList>
            <person name="Dujon B."/>
            <person name="Sherman D."/>
            <person name="Fischer G."/>
            <person name="Durrens P."/>
            <person name="Casaregola S."/>
            <person name="Lafontaine I."/>
            <person name="de Montigny J."/>
            <person name="Marck C."/>
            <person name="Neuveglise C."/>
            <person name="Talla E."/>
            <person name="Goffard N."/>
            <person name="Frangeul L."/>
            <person name="Aigle M."/>
            <person name="Anthouard V."/>
            <person name="Babour A."/>
            <person name="Barbe V."/>
            <person name="Barnay S."/>
            <person name="Blanchin S."/>
            <person name="Beckerich J.-M."/>
            <person name="Beyne E."/>
            <person name="Bleykasten C."/>
            <person name="Boisrame A."/>
            <person name="Boyer J."/>
            <person name="Cattolico L."/>
            <person name="Confanioleri F."/>
            <person name="de Daruvar A."/>
            <person name="Despons L."/>
            <person name="Fabre E."/>
            <person name="Fairhead C."/>
            <person name="Ferry-Dumazet H."/>
            <person name="Groppi A."/>
            <person name="Hantraye F."/>
            <person name="Hennequin C."/>
            <person name="Jauniaux N."/>
            <person name="Joyet P."/>
            <person name="Kachouri R."/>
            <person name="Kerrest A."/>
            <person name="Koszul R."/>
            <person name="Lemaire M."/>
            <person name="Lesur I."/>
            <person name="Ma L."/>
            <person name="Muller H."/>
            <person name="Nicaud J.-M."/>
            <person name="Nikolski M."/>
            <person name="Oztas S."/>
            <person name="Ozier-Kalogeropoulos O."/>
            <person name="Pellenz S."/>
            <person name="Potier S."/>
            <person name="Richard G.-F."/>
            <person name="Straub M.-L."/>
            <person name="Suleau A."/>
            <person name="Swennen D."/>
            <person name="Tekaia F."/>
            <person name="Wesolowski-Louvel M."/>
            <person name="Westhof E."/>
            <person name="Wirth B."/>
            <person name="Zeniou-Meyer M."/>
            <person name="Zivanovic Y."/>
            <person name="Bolotin-Fukuhara M."/>
            <person name="Thierry A."/>
            <person name="Bouchier C."/>
            <person name="Caudron B."/>
            <person name="Scarpelli C."/>
            <person name="Gaillardin C."/>
            <person name="Weissenbach J."/>
            <person name="Wincker P."/>
            <person name="Souciet J.-L."/>
        </authorList>
    </citation>
    <scope>NUCLEOTIDE SEQUENCE [LARGE SCALE GENOMIC DNA]</scope>
    <source>
        <strain>ATCC 2001 / BCRC 20586 / JCM 3761 / NBRC 0622 / NRRL Y-65 / CBS 138</strain>
    </source>
</reference>
<gene>
    <name type="primary">ATG32</name>
    <name type="ordered locus">CAGL0H06545g</name>
</gene>
<name>ATG32_CANGA</name>
<organism>
    <name type="scientific">Candida glabrata (strain ATCC 2001 / BCRC 20586 / JCM 3761 / NBRC 0622 / NRRL Y-65 / CBS 138)</name>
    <name type="common">Yeast</name>
    <name type="synonym">Nakaseomyces glabratus</name>
    <dbReference type="NCBI Taxonomy" id="284593"/>
    <lineage>
        <taxon>Eukaryota</taxon>
        <taxon>Fungi</taxon>
        <taxon>Dikarya</taxon>
        <taxon>Ascomycota</taxon>
        <taxon>Saccharomycotina</taxon>
        <taxon>Saccharomycetes</taxon>
        <taxon>Saccharomycetales</taxon>
        <taxon>Saccharomycetaceae</taxon>
        <taxon>Nakaseomyces</taxon>
    </lineage>
</organism>
<feature type="chain" id="PRO_0000399757" description="Autophagy-related protein 32">
    <location>
        <begin position="1"/>
        <end position="492"/>
    </location>
</feature>
<feature type="transmembrane region" description="Helical" evidence="2">
    <location>
        <begin position="374"/>
        <end position="390"/>
    </location>
</feature>
<feature type="region of interest" description="Disordered" evidence="3">
    <location>
        <begin position="1"/>
        <end position="97"/>
    </location>
</feature>
<feature type="region of interest" description="Disordered" evidence="3">
    <location>
        <begin position="122"/>
        <end position="157"/>
    </location>
</feature>
<feature type="region of interest" description="Disordered" evidence="3">
    <location>
        <begin position="342"/>
        <end position="368"/>
    </location>
</feature>
<feature type="compositionally biased region" description="Polar residues" evidence="3">
    <location>
        <begin position="10"/>
        <end position="26"/>
    </location>
</feature>
<feature type="compositionally biased region" description="Low complexity" evidence="3">
    <location>
        <begin position="342"/>
        <end position="351"/>
    </location>
</feature>
<feature type="compositionally biased region" description="Basic residues" evidence="3">
    <location>
        <begin position="356"/>
        <end position="365"/>
    </location>
</feature>
<proteinExistence type="inferred from homology"/>
<keyword id="KW-0072">Autophagy</keyword>
<keyword id="KW-0472">Membrane</keyword>
<keyword id="KW-0496">Mitochondrion</keyword>
<keyword id="KW-1000">Mitochondrion outer membrane</keyword>
<keyword id="KW-1185">Reference proteome</keyword>
<keyword id="KW-0812">Transmembrane</keyword>
<keyword id="KW-1133">Transmembrane helix</keyword>
<keyword id="KW-0926">Vacuole</keyword>
<dbReference type="EMBL" id="CR380954">
    <property type="protein sequence ID" value="CAG60013.1"/>
    <property type="molecule type" value="Genomic_DNA"/>
</dbReference>
<dbReference type="RefSeq" id="XP_447080.1">
    <property type="nucleotide sequence ID" value="XM_447080.1"/>
</dbReference>
<dbReference type="SMR" id="Q6FRR4"/>
<dbReference type="FunCoup" id="Q6FRR4">
    <property type="interactions" value="68"/>
</dbReference>
<dbReference type="STRING" id="284593.Q6FRR4"/>
<dbReference type="EnsemblFungi" id="CAGL0H06545g-T">
    <property type="protein sequence ID" value="CAGL0H06545g-T-p1"/>
    <property type="gene ID" value="CAGL0H06545g"/>
</dbReference>
<dbReference type="KEGG" id="cgr:2888646"/>
<dbReference type="CGD" id="CAL0130627">
    <property type="gene designation" value="CAGL0H06545g"/>
</dbReference>
<dbReference type="VEuPathDB" id="FungiDB:CAGL0H06545g"/>
<dbReference type="eggNOG" id="ENOG502QY5V">
    <property type="taxonomic scope" value="Eukaryota"/>
</dbReference>
<dbReference type="HOGENOM" id="CLU_039418_0_0_1"/>
<dbReference type="InParanoid" id="Q6FRR4"/>
<dbReference type="OMA" id="IPICQPG"/>
<dbReference type="PHI-base" id="PHI:6582"/>
<dbReference type="Proteomes" id="UP000002428">
    <property type="component" value="Chromosome H"/>
</dbReference>
<dbReference type="GO" id="GO:0005741">
    <property type="term" value="C:mitochondrial outer membrane"/>
    <property type="evidence" value="ECO:0007669"/>
    <property type="project" value="UniProtKB-SubCell"/>
</dbReference>
<dbReference type="GO" id="GO:0034045">
    <property type="term" value="C:phagophore assembly site membrane"/>
    <property type="evidence" value="ECO:0007669"/>
    <property type="project" value="UniProtKB-SubCell"/>
</dbReference>
<dbReference type="GO" id="GO:0005774">
    <property type="term" value="C:vacuolar membrane"/>
    <property type="evidence" value="ECO:0007669"/>
    <property type="project" value="UniProtKB-SubCell"/>
</dbReference>
<dbReference type="GO" id="GO:0006914">
    <property type="term" value="P:autophagy"/>
    <property type="evidence" value="ECO:0007669"/>
    <property type="project" value="UniProtKB-KW"/>
</dbReference>
<dbReference type="CDD" id="cd19929">
    <property type="entry name" value="psREC_Atg32"/>
    <property type="match status" value="1"/>
</dbReference>
<accession>Q6FRR4</accession>
<comment type="function">
    <text evidence="1">Mitophagy-specific receptor that recruits the autophagic machinery to mitochondria and regulates selective degradation of mitochondria. Mitophagy contributes to regulate mitochondrial quantity and quality by eliminating the mitochondria to a basal level to fulfill cellular energy requirements and preventing excess ROS production. Recruits ATG11 to the surface of mitochondria. Also promotes autophagy-dependent peroxisome degradation (By similarity).</text>
</comment>
<comment type="subcellular location">
    <subcellularLocation>
        <location evidence="1">Mitochondrion outer membrane</location>
        <topology evidence="1">Single-pass membrane protein</topology>
    </subcellularLocation>
    <subcellularLocation>
        <location evidence="1">Vacuole membrane</location>
        <topology evidence="1">Single-pass membrane protein</topology>
    </subcellularLocation>
    <subcellularLocation>
        <location evidence="1">Preautophagosomal structure membrane</location>
        <topology evidence="1">Single-pass membrane protein</topology>
    </subcellularLocation>
    <text evidence="1">Is recruited to the preautophagosomal structure during mitophagy and imported into the vacuole along with mitochondria during starvation.</text>
</comment>
<comment type="similarity">
    <text evidence="4">Belongs to the ATG32 family.</text>
</comment>
<evidence type="ECO:0000250" key="1"/>
<evidence type="ECO:0000255" key="2"/>
<evidence type="ECO:0000256" key="3">
    <source>
        <dbReference type="SAM" id="MobiDB-lite"/>
    </source>
</evidence>
<evidence type="ECO:0000305" key="4"/>
<sequence length="492" mass="55053">MLRFQRGTVKESSSAKLASTSRNGPESSILDPHHSVMELLQRQMEGSEVPSESGVLGESWQQIRESDVGDGGDSNFDQQSNTSAILSSSSEASEDEDLDIQQQLLGGQQEYKNFHMTAEEQLQEQAQGQGFGRPSLLKGTQSRLSEQDSNRSGSVRTIVDKGSCSSSLDEHELNSIFTSDSMSLTKSTGSSSTSFVMPKLSLTYKPSQAKKLLVVGRLSKRFHQDIPREYRQYFHISQSSDPSEFQNYIGIVIVFQELKEFVAMLNRIVQYTDKKPIIPICQPGQRIRVKNILKSFLKNDAITLWYPPVTIANEKSMEKLFKHTVKLVNKLENEEDVLSLSTSDKSLSDETSGYRKNNRRKKHGGKPSTNYSKWITWGISLTIGVSIGYYATYMITTTLLYGKAESHHANEAKGFSITNGNSGSSSISHSTEYYESTISQKGLLRNTIVFIKRTIHNLNGKVGTFFASITQVIKQTPVREDNQFYTLGYMLS</sequence>